<protein>
    <recommendedName>
        <fullName evidence="12">Mu/omega-theraphotoxin-Hs1a</fullName>
        <shortName evidence="12">Mu/omega-TRTX-Hs1a</shortName>
    </recommendedName>
    <alternativeName>
        <fullName evidence="15">Huwentoxin-1</fullName>
        <shortName evidence="15">HwTx-1</shortName>
    </alternativeName>
    <alternativeName>
        <fullName evidence="13 14">Huwentoxin-I</fullName>
        <shortName evidence="13 14">HwTx-I</shortName>
    </alternativeName>
</protein>
<evidence type="ECO:0000255" key="1"/>
<evidence type="ECO:0000269" key="2">
    <source>
    </source>
</evidence>
<evidence type="ECO:0000269" key="3">
    <source>
    </source>
</evidence>
<evidence type="ECO:0000269" key="4">
    <source>
    </source>
</evidence>
<evidence type="ECO:0000269" key="5">
    <source>
    </source>
</evidence>
<evidence type="ECO:0000269" key="6">
    <source>
    </source>
</evidence>
<evidence type="ECO:0000269" key="7">
    <source>
    </source>
</evidence>
<evidence type="ECO:0000269" key="8">
    <source>
    </source>
</evidence>
<evidence type="ECO:0000269" key="9">
    <source ref="3"/>
</evidence>
<evidence type="ECO:0000269" key="10">
    <source ref="6"/>
</evidence>
<evidence type="ECO:0000269" key="11">
    <source ref="9"/>
</evidence>
<evidence type="ECO:0000303" key="12">
    <source>
    </source>
</evidence>
<evidence type="ECO:0000303" key="13">
    <source>
    </source>
</evidence>
<evidence type="ECO:0000303" key="14">
    <source>
    </source>
</evidence>
<evidence type="ECO:0000305" key="15"/>
<evidence type="ECO:0000305" key="16">
    <source>
    </source>
</evidence>
<evidence type="ECO:0000305" key="17">
    <source>
    </source>
</evidence>
<evidence type="ECO:0000305" key="18">
    <source>
    </source>
</evidence>
<evidence type="ECO:0000305" key="19">
    <source ref="3"/>
</evidence>
<evidence type="ECO:0000312" key="20">
    <source>
        <dbReference type="PDB" id="1QK6"/>
    </source>
</evidence>
<evidence type="ECO:0007829" key="21">
    <source>
        <dbReference type="PDB" id="1QK6"/>
    </source>
</evidence>
<sequence length="81" mass="9319">MRASMFLALAGLVLLFVVCYASESEEKEFPRELLFKFFAVDDFKGEERACKGVFDACTPGKNECCPNRVCSDKHKWCKWKL</sequence>
<feature type="signal peptide" evidence="1">
    <location>
        <begin position="1"/>
        <end position="21"/>
    </location>
</feature>
<feature type="propeptide" id="PRO_0000035558" evidence="18">
    <location>
        <begin position="22"/>
        <end position="48"/>
    </location>
</feature>
<feature type="chain" id="PRO_0000035559" description="Mu/omega-theraphotoxin-Hs1a" evidence="7">
    <location>
        <begin position="49"/>
        <end position="81"/>
    </location>
</feature>
<feature type="disulfide bond" evidence="6 8 20">
    <location>
        <begin position="50"/>
        <end position="65"/>
    </location>
</feature>
<feature type="disulfide bond" evidence="6 8 20">
    <location>
        <begin position="57"/>
        <end position="70"/>
    </location>
</feature>
<feature type="disulfide bond" evidence="6 8 20">
    <location>
        <begin position="64"/>
        <end position="77"/>
    </location>
</feature>
<feature type="mutagenesis site" description="No decrease in bioactivity." evidence="11">
    <original>A</original>
    <variation>Y</variation>
    <location>
        <position position="49"/>
    </location>
</feature>
<feature type="mutagenesis site" description="Decrease in bioactivity." evidence="10">
    <original>K</original>
    <variation>A</variation>
    <location>
        <position position="51"/>
    </location>
</feature>
<feature type="mutagenesis site" description="92% decrease in bioactivity." evidence="3">
    <original>R</original>
    <variation>A</variation>
    <location>
        <position position="68"/>
    </location>
</feature>
<feature type="turn" evidence="21">
    <location>
        <begin position="59"/>
        <end position="62"/>
    </location>
</feature>
<feature type="strand" evidence="21">
    <location>
        <begin position="66"/>
        <end position="70"/>
    </location>
</feature>
<feature type="strand" evidence="21">
    <location>
        <begin position="72"/>
        <end position="74"/>
    </location>
</feature>
<feature type="strand" evidence="21">
    <location>
        <begin position="76"/>
        <end position="79"/>
    </location>
</feature>
<proteinExistence type="evidence at protein level"/>
<keyword id="KW-0002">3D-structure</keyword>
<keyword id="KW-0108">Calcium channel impairing toxin</keyword>
<keyword id="KW-0903">Direct protein sequencing</keyword>
<keyword id="KW-1015">Disulfide bond</keyword>
<keyword id="KW-0872">Ion channel impairing toxin</keyword>
<keyword id="KW-0960">Knottin</keyword>
<keyword id="KW-0528">Neurotoxin</keyword>
<keyword id="KW-0629">Postsynaptic neurotoxin</keyword>
<keyword id="KW-0638">Presynaptic neurotoxin</keyword>
<keyword id="KW-0964">Secreted</keyword>
<keyword id="KW-0732">Signal</keyword>
<keyword id="KW-0800">Toxin</keyword>
<keyword id="KW-1218">Voltage-gated calcium channel impairing toxin</keyword>
<keyword id="KW-0738">Voltage-gated sodium channel impairing toxin</keyword>
<name>TXH1_CYRSC</name>
<comment type="function">
    <text evidence="4">Lethal toxin with multiple biological activities. Inhibits voltage-gated TTX-sensitive sodium channels in DRG neurons (IC(50)=55 nM) and also shows activity when directly tested on Nav1.7/SCN9A (IC(50)=25.1-630 nM) (PubMed:17451655, PubMed:21731778, PubMed:31234412). Inhibits N-type calcium channels (Cav2.2/CACNA1B (IC(50)=100 nM)) (PubMed:11024489, PubMed:17451655). Also blocks neuromuscular transmission (PubMed:10736477, PubMed:8212049, PubMed:9028007). In vivo, intrathecal injected toxin shows analgesic activity in the rat formalin-induced pain model, without induction of motor dysfunction in rats.</text>
</comment>
<comment type="subcellular location">
    <subcellularLocation>
        <location evidence="6 9">Secreted</location>
    </subcellularLocation>
</comment>
<comment type="tissue specificity">
    <text evidence="17 19">Expressed by the venom gland.</text>
</comment>
<comment type="domain">
    <text evidence="6 8">The presence of a 'disulfide through disulfide knot' structurally defines this protein as a knottin.</text>
</comment>
<comment type="toxic dose">
    <text evidence="7">LD(50) is 0.7 mg/kg by intraperitoneal injection into mice.</text>
</comment>
<comment type="toxic dose">
    <text evidence="7">LD(50) is 9.40 ug/kg by intracisternal injection into mice.</text>
</comment>
<comment type="miscellaneous">
    <text evidence="2 5">Negative results: shows very weak effect on calcium channel Cav1 subtypes (PubMed:11024489, PubMed:17451655). Does not show effect on calcium channel Cav3 subtypes (PubMed:11024489, PubMed:17451655). Does not show effect on voltage-gated potassium channels Kv (delayed rectifier) (PubMed:11024489). Does not show effect on voltage-gated TTX-resistant sodium channels (PubMed:17451655).</text>
</comment>
<comment type="miscellaneous">
    <text evidence="16">Is the most abundant toxin in the crude venom.</text>
</comment>
<comment type="similarity">
    <text evidence="15">Belongs to the neurotoxin 10 (Hwtx-1) family. 23 (HwTx-I) subfamily.</text>
</comment>
<accession>P56676</accession>
<accession>Q86C48</accession>
<accession>Q9NJC2</accession>
<dbReference type="EMBL" id="AY263711">
    <property type="protein sequence ID" value="AAP33078.1"/>
    <property type="molecule type" value="mRNA"/>
</dbReference>
<dbReference type="EMBL" id="AF157504">
    <property type="protein sequence ID" value="AAF25774.1"/>
    <property type="molecule type" value="mRNA"/>
</dbReference>
<dbReference type="PIR" id="A37479">
    <property type="entry name" value="A37479"/>
</dbReference>
<dbReference type="PDB" id="1QK6">
    <property type="method" value="NMR"/>
    <property type="chains" value="A=49-81"/>
</dbReference>
<dbReference type="PDBsum" id="1QK6"/>
<dbReference type="SMR" id="P56676"/>
<dbReference type="TCDB" id="8.B.3.1.1">
    <property type="family name" value="the huwentoxin-1 (huwentoxin-1) family"/>
</dbReference>
<dbReference type="ArachnoServer" id="AS000327">
    <property type="toxin name" value="mu/omega-theraphotoxin-Hs1a"/>
</dbReference>
<dbReference type="EvolutionaryTrace" id="P56676"/>
<dbReference type="GO" id="GO:0005576">
    <property type="term" value="C:extracellular region"/>
    <property type="evidence" value="ECO:0007669"/>
    <property type="project" value="UniProtKB-SubCell"/>
</dbReference>
<dbReference type="GO" id="GO:0035792">
    <property type="term" value="C:host cell postsynaptic membrane"/>
    <property type="evidence" value="ECO:0007669"/>
    <property type="project" value="UniProtKB-KW"/>
</dbReference>
<dbReference type="GO" id="GO:0044231">
    <property type="term" value="C:host cell presynaptic membrane"/>
    <property type="evidence" value="ECO:0007669"/>
    <property type="project" value="UniProtKB-KW"/>
</dbReference>
<dbReference type="GO" id="GO:0005246">
    <property type="term" value="F:calcium channel regulator activity"/>
    <property type="evidence" value="ECO:0007669"/>
    <property type="project" value="UniProtKB-KW"/>
</dbReference>
<dbReference type="GO" id="GO:0008200">
    <property type="term" value="F:ion channel inhibitor activity"/>
    <property type="evidence" value="ECO:0007669"/>
    <property type="project" value="InterPro"/>
</dbReference>
<dbReference type="GO" id="GO:0017080">
    <property type="term" value="F:sodium channel regulator activity"/>
    <property type="evidence" value="ECO:0007669"/>
    <property type="project" value="UniProtKB-KW"/>
</dbReference>
<dbReference type="GO" id="GO:0090729">
    <property type="term" value="F:toxin activity"/>
    <property type="evidence" value="ECO:0007669"/>
    <property type="project" value="UniProtKB-KW"/>
</dbReference>
<dbReference type="InterPro" id="IPR011696">
    <property type="entry name" value="Huwentoxin-1"/>
</dbReference>
<dbReference type="InterPro" id="IPR013140">
    <property type="entry name" value="Huwentoxin_CS1"/>
</dbReference>
<dbReference type="Pfam" id="PF07740">
    <property type="entry name" value="Toxin_12"/>
    <property type="match status" value="1"/>
</dbReference>
<dbReference type="SUPFAM" id="SSF57059">
    <property type="entry name" value="omega toxin-like"/>
    <property type="match status" value="1"/>
</dbReference>
<dbReference type="PROSITE" id="PS60021">
    <property type="entry name" value="HWTX_1"/>
    <property type="match status" value="1"/>
</dbReference>
<organism>
    <name type="scientific">Cyriopagopus schmidti</name>
    <name type="common">Chinese bird spider</name>
    <name type="synonym">Haplopelma schmidti</name>
    <dbReference type="NCBI Taxonomy" id="29017"/>
    <lineage>
        <taxon>Eukaryota</taxon>
        <taxon>Metazoa</taxon>
        <taxon>Ecdysozoa</taxon>
        <taxon>Arthropoda</taxon>
        <taxon>Chelicerata</taxon>
        <taxon>Arachnida</taxon>
        <taxon>Araneae</taxon>
        <taxon>Mygalomorphae</taxon>
        <taxon>Theraphosidae</taxon>
        <taxon>Cyriopagopus</taxon>
    </lineage>
</organism>
<reference key="1">
    <citation type="journal article" date="2003" name="Toxicon">
        <title>cDNA sequence analysis of seven peptide toxins from the spider Selenocosmia huwena.</title>
        <authorList>
            <person name="Diao J."/>
            <person name="Lin Y."/>
            <person name="Tang J."/>
            <person name="Liang S.-P."/>
        </authorList>
    </citation>
    <scope>NUCLEOTIDE SEQUENCE [MRNA]</scope>
    <source>
        <tissue>Venom gland</tissue>
    </source>
</reference>
<reference key="2">
    <citation type="journal article" date="1993" name="Toxicon">
        <title>Properties and amino acid sequence of huwentoxin-I, a neurotoxin purified from the venom of the Chinese bird spider Selenocosmia huwena.</title>
        <authorList>
            <person name="Liang S.-P."/>
            <person name="Zhang D.-Y."/>
            <person name="Pan X."/>
            <person name="Chen Q."/>
            <person name="Zhou P.-A."/>
        </authorList>
    </citation>
    <scope>PROTEIN SEQUENCE OF 49-81</scope>
    <scope>FUNCTION</scope>
    <scope>SUBCELLULAR LOCATION</scope>
    <scope>LETHAL DOSES</scope>
    <source>
        <tissue>Venom</tissue>
    </source>
</reference>
<reference key="3">
    <citation type="journal article" date="2001" name="Zhongguo Sheng Wu Hua Xue Yu Fen Zi Sheng Wu Xue Bao">
        <title>Sequence and cloning of huwentoxin-I cDNA.</title>
        <authorList>
            <person name="Li M."/>
            <person name="Zhou Z."/>
            <person name="Liang S.-P."/>
        </authorList>
    </citation>
    <scope>NUCLEOTIDE SEQUENCE [MRNA] OF 49-80</scope>
    <source>
        <tissue>Venom gland</tissue>
    </source>
</reference>
<reference key="4">
    <citation type="journal article" date="1993" name="J. Protein Chem.">
        <title>Assignment of the three disulfide bridges of huwentoxin-I, a neurotoxin from the spider Selenocosmia huwena.</title>
        <authorList>
            <person name="Zhang D.-Y."/>
            <person name="Liang S.-P."/>
        </authorList>
    </citation>
    <scope>DISULFIDE BONDS</scope>
    <scope>SUBCELLULAR LOCATION</scope>
    <source>
        <tissue>Venom</tissue>
    </source>
</reference>
<reference key="5">
    <citation type="journal article" date="1997" name="Toxicon">
        <title>Blockade of neuromuscular transmission by huwentoxin-I, purified from the venom of the Chinese bird spider Selenocosmia huwena.</title>
        <authorList>
            <person name="Zhou P.-A."/>
            <person name="Xie X.-J."/>
            <person name="Li M."/>
            <person name="Yang D.-M."/>
            <person name="Xie Z.-P."/>
            <person name="Zong X."/>
            <person name="Liang S.-P."/>
        </authorList>
    </citation>
    <scope>FUNCTION</scope>
    <source>
        <tissue>Venom</tissue>
    </source>
</reference>
<reference key="6">
    <citation type="journal article" date="1998" name="Sheng Ming Ke Xue Yan Jiu">
        <title>Chemical synthesis and physiological analysis of K3A-HWTX-I: a mutant of huwentoxin-I.</title>
        <authorList>
            <person name="Wang X.-C."/>
            <person name="Liang S.-P."/>
            <person name="Luo Z.-M."/>
        </authorList>
    </citation>
    <scope>MUTAGENESIS OF LYS-51</scope>
</reference>
<reference key="7">
    <citation type="journal article" date="2000" name="Sheng Wu Gong Cheng Xue Bao">
        <title>Chemical synthesis and characterization of R20A-HWTX-I, a mutant of huwentoxin-I with single residue replacement.</title>
        <authorList>
            <person name="Wang X.-C."/>
            <person name="Liang S.-P."/>
            <person name="Luo Z.-M."/>
        </authorList>
    </citation>
    <scope>MUTAGENESIS OF ARG-68</scope>
</reference>
<reference key="8">
    <citation type="journal article" date="2000" name="Toxicon">
        <title>The presynaptic activity of huwentoxin-I, a neurotoxin from the venom of the Chinese bird spider Selenocosmia huwena.</title>
        <authorList>
            <person name="Liang S.-P."/>
            <person name="Chen X.-D."/>
            <person name="Shu Q."/>
            <person name="Zhang Y."/>
            <person name="Peng K."/>
        </authorList>
    </citation>
    <scope>FUNCTION</scope>
</reference>
<reference key="9">
    <citation type="journal article" date="2000" name="Zhongguo Sheng Wu Hua Xue Yu Fen Zi Sheng Wu Xue Bao">
        <title>Solid-phase synthesis and bioactivity analysis of A1Y-HWTX-I: a mutant of huwentoxin-I.</title>
        <authorList>
            <person name="Wang X.-C."/>
            <person name="Liang S.-P."/>
            <person name="Luo Z.-M."/>
        </authorList>
    </citation>
    <scope>MUTAGENESIS OF ALA-49</scope>
</reference>
<reference key="10">
    <citation type="journal article" date="2001" name="Toxicon">
        <title>The effect of huwentoxin-I on Ca(2+) channels in differentiated NG108-15 cells, a patch-clamp study.</title>
        <authorList>
            <person name="Peng K."/>
            <person name="Chen X.D."/>
            <person name="Liang S.-P."/>
        </authorList>
    </citation>
    <scope>FUNCTION</scope>
</reference>
<reference key="11">
    <citation type="journal article" date="2005" name="Toxicon">
        <title>Antinociceptive effects of intrathecally administered huwentoxin-I, a selective N-type calcium channel blocker, in the formalin test in conscious rats.</title>
        <authorList>
            <person name="Chen J.Q."/>
            <person name="Zhang Y.Q."/>
            <person name="Dai J."/>
            <person name="Luo Z.M."/>
            <person name="Liang S.P."/>
        </authorList>
    </citation>
    <scope>FUNCTION</scope>
    <scope>BIOASSAY IN PAIN MODEL</scope>
</reference>
<reference key="12">
    <citation type="journal article" date="2007" name="Biochem. Biophys. Res. Commun.">
        <title>The cross channel activities of spider neurotoxin huwentoxin-I on rat dorsal root ganglion neurons.</title>
        <authorList>
            <person name="Wang M."/>
            <person name="Guan X."/>
            <person name="Liang S."/>
        </authorList>
    </citation>
    <scope>FUNCTION</scope>
</reference>
<reference key="13">
    <citation type="journal article" date="2011" name="PLoS ONE">
        <title>Functional expression of spider neurotoxic peptide huwentoxin-I in E. coli.</title>
        <authorList>
            <person name="Meng E."/>
            <person name="Cai T.F."/>
            <person name="Li W.Y."/>
            <person name="Zhang H."/>
            <person name="Liu Y.B."/>
            <person name="Peng K."/>
            <person name="Liang S."/>
            <person name="Zhang D.Y."/>
        </authorList>
    </citation>
    <scope>FUNCTION</scope>
    <scope>RECOMBINANT EXPRESSION</scope>
</reference>
<reference key="14">
    <citation type="journal article" date="2019" name="Toxins">
        <title>Chemical synthesis, proper folding, Nav channel selectivity profile and analgesic properties of the spider peptide Phlotoxin 1.</title>
        <authorList>
            <person name="Nicolas S."/>
            <person name="Zoukimian C."/>
            <person name="Bosmans F."/>
            <person name="Montnach J."/>
            <person name="Diochot S."/>
            <person name="Cuypers E."/>
            <person name="De Waard S."/>
            <person name="Beroud R."/>
            <person name="Mebs D."/>
            <person name="Craik D."/>
            <person name="Boturyn D."/>
            <person name="Lazdunski M."/>
            <person name="Tytgat J."/>
            <person name="De Waard M."/>
        </authorList>
    </citation>
    <scope>FUNCTION ON NAV1.7/SCN9A</scope>
    <scope>SYNTHESIS OF 49-81</scope>
</reference>
<reference key="15">
    <citation type="journal article" date="1997" name="J. Protein Chem.">
        <title>Proton nuclear magnetic resonance studies on huwentoxin-I from the venom of the spider Selenocosmia huwena: 2. Three-dimensional structure in solution.</title>
        <authorList>
            <person name="Qu Y.-X."/>
            <person name="Liang S.-P."/>
            <person name="Ding J."/>
            <person name="Liu X.-C."/>
            <person name="Zhang R.-J."/>
            <person name="Gu X.-C."/>
        </authorList>
    </citation>
    <scope>STRUCTURE BY NMR OF 49-81</scope>
    <scope>DISULFIDE BOND</scope>
    <source>
        <tissue>Venom</tissue>
    </source>
</reference>